<feature type="chain" id="PRO_0000129718" description="Large ribosomal subunit protein uL2">
    <location>
        <begin position="1"/>
        <end position="237"/>
    </location>
</feature>
<feature type="region of interest" description="Disordered" evidence="2">
    <location>
        <begin position="1"/>
        <end position="26"/>
    </location>
</feature>
<feature type="region of interest" description="Disordered" evidence="2">
    <location>
        <begin position="204"/>
        <end position="237"/>
    </location>
</feature>
<feature type="compositionally biased region" description="Polar residues" evidence="2">
    <location>
        <begin position="1"/>
        <end position="11"/>
    </location>
</feature>
<feature type="compositionally biased region" description="Basic residues" evidence="2">
    <location>
        <begin position="13"/>
        <end position="26"/>
    </location>
</feature>
<feature type="compositionally biased region" description="Basic residues" evidence="2">
    <location>
        <begin position="228"/>
        <end position="237"/>
    </location>
</feature>
<reference key="1">
    <citation type="journal article" date="1989" name="Can. J. Microbiol.">
        <title>Comparative studies of ribosomal proteins and their genes from Methanococcus vannielii and other organisms.</title>
        <authorList>
            <person name="Koepke A.K.E."/>
            <person name="Wittmann-Liebold B."/>
        </authorList>
    </citation>
    <scope>NUCLEOTIDE SEQUENCE [GENOMIC DNA]</scope>
</reference>
<evidence type="ECO:0000255" key="1">
    <source>
        <dbReference type="HAMAP-Rule" id="MF_01320"/>
    </source>
</evidence>
<evidence type="ECO:0000256" key="2">
    <source>
        <dbReference type="SAM" id="MobiDB-lite"/>
    </source>
</evidence>
<evidence type="ECO:0000305" key="3"/>
<name>RL2_METVA</name>
<sequence>MGKRLISQNRGRGTPKYRSPSHKRKGEVKYRSYDEMEKVGKVLGTVIDVLHDPGRSAPVAKVRFANGEERLVLIPEGISVGEQIECGISAEIKPGNVLPLGEIPEGIPVYNIETIPGDGGKLVRAGGCYAHVVAHDIGKTIVKLPSGYAKVLNPACRATIGVVAGGGRKEKPFVKAGKKHHSLSAKAVAWPKVRGVAMNAVDHPYGGGRHQHLGKPSSVSRNTSPGRKVGHIASRRT</sequence>
<dbReference type="PIR" id="S11596">
    <property type="entry name" value="S11596"/>
</dbReference>
<dbReference type="SMR" id="P21479"/>
<dbReference type="GO" id="GO:0022625">
    <property type="term" value="C:cytosolic large ribosomal subunit"/>
    <property type="evidence" value="ECO:0007669"/>
    <property type="project" value="TreeGrafter"/>
</dbReference>
<dbReference type="GO" id="GO:0019843">
    <property type="term" value="F:rRNA binding"/>
    <property type="evidence" value="ECO:0007669"/>
    <property type="project" value="UniProtKB-UniRule"/>
</dbReference>
<dbReference type="GO" id="GO:0003735">
    <property type="term" value="F:structural constituent of ribosome"/>
    <property type="evidence" value="ECO:0007669"/>
    <property type="project" value="InterPro"/>
</dbReference>
<dbReference type="GO" id="GO:0002181">
    <property type="term" value="P:cytoplasmic translation"/>
    <property type="evidence" value="ECO:0007669"/>
    <property type="project" value="TreeGrafter"/>
</dbReference>
<dbReference type="FunFam" id="2.40.50.140:FF:000020">
    <property type="entry name" value="60S ribosomal protein L2"/>
    <property type="match status" value="1"/>
</dbReference>
<dbReference type="FunFam" id="4.10.950.10:FF:000002">
    <property type="entry name" value="60S ribosomal protein L2"/>
    <property type="match status" value="1"/>
</dbReference>
<dbReference type="FunFam" id="2.30.30.30:FF:000006">
    <property type="entry name" value="60S ribosomal protein L8"/>
    <property type="match status" value="1"/>
</dbReference>
<dbReference type="Gene3D" id="2.30.30.30">
    <property type="match status" value="1"/>
</dbReference>
<dbReference type="Gene3D" id="2.40.50.140">
    <property type="entry name" value="Nucleic acid-binding proteins"/>
    <property type="match status" value="1"/>
</dbReference>
<dbReference type="Gene3D" id="4.10.950.10">
    <property type="entry name" value="Ribosomal protein L2, domain 3"/>
    <property type="match status" value="1"/>
</dbReference>
<dbReference type="HAMAP" id="MF_01320_A">
    <property type="entry name" value="Ribosomal_uL2_A"/>
    <property type="match status" value="1"/>
</dbReference>
<dbReference type="InterPro" id="IPR012340">
    <property type="entry name" value="NA-bd_OB-fold"/>
</dbReference>
<dbReference type="InterPro" id="IPR014722">
    <property type="entry name" value="Rib_uL2_dom2"/>
</dbReference>
<dbReference type="InterPro" id="IPR002171">
    <property type="entry name" value="Ribosomal_uL2"/>
</dbReference>
<dbReference type="InterPro" id="IPR023672">
    <property type="entry name" value="Ribosomal_uL2_arc_euk"/>
</dbReference>
<dbReference type="InterPro" id="IPR022669">
    <property type="entry name" value="Ribosomal_uL2_C"/>
</dbReference>
<dbReference type="InterPro" id="IPR022671">
    <property type="entry name" value="Ribosomal_uL2_CS"/>
</dbReference>
<dbReference type="InterPro" id="IPR014726">
    <property type="entry name" value="Ribosomal_uL2_dom3"/>
</dbReference>
<dbReference type="InterPro" id="IPR022666">
    <property type="entry name" value="Ribosomal_uL2_RNA-bd_dom"/>
</dbReference>
<dbReference type="InterPro" id="IPR008991">
    <property type="entry name" value="Translation_prot_SH3-like_sf"/>
</dbReference>
<dbReference type="NCBIfam" id="NF007180">
    <property type="entry name" value="PRK09612.1"/>
    <property type="match status" value="1"/>
</dbReference>
<dbReference type="PANTHER" id="PTHR13691:SF16">
    <property type="entry name" value="LARGE RIBOSOMAL SUBUNIT PROTEIN UL2"/>
    <property type="match status" value="1"/>
</dbReference>
<dbReference type="PANTHER" id="PTHR13691">
    <property type="entry name" value="RIBOSOMAL PROTEIN L2"/>
    <property type="match status" value="1"/>
</dbReference>
<dbReference type="Pfam" id="PF00181">
    <property type="entry name" value="Ribosomal_L2"/>
    <property type="match status" value="1"/>
</dbReference>
<dbReference type="Pfam" id="PF03947">
    <property type="entry name" value="Ribosomal_L2_C"/>
    <property type="match status" value="1"/>
</dbReference>
<dbReference type="PIRSF" id="PIRSF002158">
    <property type="entry name" value="Ribosomal_L2"/>
    <property type="match status" value="1"/>
</dbReference>
<dbReference type="SMART" id="SM01383">
    <property type="entry name" value="Ribosomal_L2"/>
    <property type="match status" value="1"/>
</dbReference>
<dbReference type="SMART" id="SM01382">
    <property type="entry name" value="Ribosomal_L2_C"/>
    <property type="match status" value="1"/>
</dbReference>
<dbReference type="SUPFAM" id="SSF50249">
    <property type="entry name" value="Nucleic acid-binding proteins"/>
    <property type="match status" value="1"/>
</dbReference>
<dbReference type="SUPFAM" id="SSF50104">
    <property type="entry name" value="Translation proteins SH3-like domain"/>
    <property type="match status" value="1"/>
</dbReference>
<dbReference type="PROSITE" id="PS00467">
    <property type="entry name" value="RIBOSOMAL_L2"/>
    <property type="match status" value="1"/>
</dbReference>
<organism>
    <name type="scientific">Methanococcus vannielii</name>
    <dbReference type="NCBI Taxonomy" id="2187"/>
    <lineage>
        <taxon>Archaea</taxon>
        <taxon>Methanobacteriati</taxon>
        <taxon>Methanobacteriota</taxon>
        <taxon>Methanomada group</taxon>
        <taxon>Methanococci</taxon>
        <taxon>Methanococcales</taxon>
        <taxon>Methanococcaceae</taxon>
        <taxon>Methanococcus</taxon>
    </lineage>
</organism>
<proteinExistence type="inferred from homology"/>
<protein>
    <recommendedName>
        <fullName evidence="1">Large ribosomal subunit protein uL2</fullName>
    </recommendedName>
    <alternativeName>
        <fullName evidence="3">50S ribosomal protein L2</fullName>
    </alternativeName>
</protein>
<comment type="function">
    <text evidence="1">One of the primary rRNA binding proteins. Required for association of the 30S and 50S subunits to form the 70S ribosome, for tRNA binding and peptide bond formation. It has been suggested to have peptidyltransferase activity; this is somewhat controversial. Makes several contacts with the 16S rRNA in the 70S ribosome.</text>
</comment>
<comment type="subunit">
    <text evidence="1">Part of the 50S ribosomal subunit. Forms a bridge to the 30S subunit in the 70S ribosome.</text>
</comment>
<comment type="similarity">
    <text evidence="1">Belongs to the universal ribosomal protein uL2 family.</text>
</comment>
<keyword id="KW-0687">Ribonucleoprotein</keyword>
<keyword id="KW-0689">Ribosomal protein</keyword>
<keyword id="KW-0694">RNA-binding</keyword>
<keyword id="KW-0699">rRNA-binding</keyword>
<gene>
    <name evidence="1" type="primary">rpl2</name>
</gene>
<accession>P21479</accession>